<proteinExistence type="inferred from homology"/>
<evidence type="ECO:0000250" key="1"/>
<evidence type="ECO:0000255" key="2">
    <source>
        <dbReference type="HAMAP-Rule" id="MF_00100"/>
    </source>
</evidence>
<gene>
    <name evidence="2" type="primary">infB</name>
    <name type="ordered locus">TRQ2_0151</name>
</gene>
<organism>
    <name type="scientific">Thermotoga sp. (strain RQ2)</name>
    <dbReference type="NCBI Taxonomy" id="126740"/>
    <lineage>
        <taxon>Bacteria</taxon>
        <taxon>Thermotogati</taxon>
        <taxon>Thermotogota</taxon>
        <taxon>Thermotogae</taxon>
        <taxon>Thermotogales</taxon>
        <taxon>Thermotogaceae</taxon>
        <taxon>Thermotoga</taxon>
    </lineage>
</organism>
<comment type="function">
    <text evidence="2">One of the essential components for the initiation of protein synthesis. Protects formylmethionyl-tRNA from spontaneous hydrolysis and promotes its binding to the 30S ribosomal subunits. Also involved in the hydrolysis of GTP during the formation of the 70S ribosomal complex.</text>
</comment>
<comment type="subcellular location">
    <subcellularLocation>
        <location evidence="2">Cytoplasm</location>
    </subcellularLocation>
</comment>
<comment type="similarity">
    <text evidence="2">Belongs to the TRAFAC class translation factor GTPase superfamily. Classic translation factor GTPase family. IF-2 subfamily.</text>
</comment>
<name>IF2_THESQ</name>
<dbReference type="EMBL" id="CP000969">
    <property type="protein sequence ID" value="ACB08512.1"/>
    <property type="molecule type" value="Genomic_DNA"/>
</dbReference>
<dbReference type="RefSeq" id="WP_012310348.1">
    <property type="nucleotide sequence ID" value="NC_010483.1"/>
</dbReference>
<dbReference type="SMR" id="B1L7T1"/>
<dbReference type="KEGG" id="trq:TRQ2_0151"/>
<dbReference type="HOGENOM" id="CLU_006301_5_1_0"/>
<dbReference type="Proteomes" id="UP000001687">
    <property type="component" value="Chromosome"/>
</dbReference>
<dbReference type="GO" id="GO:0005829">
    <property type="term" value="C:cytosol"/>
    <property type="evidence" value="ECO:0007669"/>
    <property type="project" value="TreeGrafter"/>
</dbReference>
<dbReference type="GO" id="GO:0005525">
    <property type="term" value="F:GTP binding"/>
    <property type="evidence" value="ECO:0007669"/>
    <property type="project" value="UniProtKB-KW"/>
</dbReference>
<dbReference type="GO" id="GO:0003924">
    <property type="term" value="F:GTPase activity"/>
    <property type="evidence" value="ECO:0007669"/>
    <property type="project" value="UniProtKB-UniRule"/>
</dbReference>
<dbReference type="GO" id="GO:0003743">
    <property type="term" value="F:translation initiation factor activity"/>
    <property type="evidence" value="ECO:0007669"/>
    <property type="project" value="UniProtKB-UniRule"/>
</dbReference>
<dbReference type="CDD" id="cd01887">
    <property type="entry name" value="IF2_eIF5B"/>
    <property type="match status" value="1"/>
</dbReference>
<dbReference type="CDD" id="cd03702">
    <property type="entry name" value="IF2_mtIF2_II"/>
    <property type="match status" value="1"/>
</dbReference>
<dbReference type="CDD" id="cd03692">
    <property type="entry name" value="mtIF2_IVc"/>
    <property type="match status" value="1"/>
</dbReference>
<dbReference type="FunFam" id="1.10.10.2480:FF:000002">
    <property type="entry name" value="Translation initiation factor IF-2"/>
    <property type="match status" value="1"/>
</dbReference>
<dbReference type="FunFam" id="2.40.30.10:FF:000008">
    <property type="entry name" value="Translation initiation factor IF-2"/>
    <property type="match status" value="1"/>
</dbReference>
<dbReference type="FunFam" id="2.40.30.10:FF:000054">
    <property type="entry name" value="Translation initiation factor IF-2"/>
    <property type="match status" value="1"/>
</dbReference>
<dbReference type="FunFam" id="3.40.50.10050:FF:000001">
    <property type="entry name" value="Translation initiation factor IF-2"/>
    <property type="match status" value="1"/>
</dbReference>
<dbReference type="FunFam" id="3.40.50.300:FF:000019">
    <property type="entry name" value="Translation initiation factor IF-2"/>
    <property type="match status" value="1"/>
</dbReference>
<dbReference type="Gene3D" id="1.10.10.2480">
    <property type="match status" value="1"/>
</dbReference>
<dbReference type="Gene3D" id="3.40.50.300">
    <property type="entry name" value="P-loop containing nucleotide triphosphate hydrolases"/>
    <property type="match status" value="1"/>
</dbReference>
<dbReference type="Gene3D" id="2.40.30.10">
    <property type="entry name" value="Translation factors"/>
    <property type="match status" value="2"/>
</dbReference>
<dbReference type="Gene3D" id="3.40.50.10050">
    <property type="entry name" value="Translation initiation factor IF- 2, domain 3"/>
    <property type="match status" value="1"/>
</dbReference>
<dbReference type="HAMAP" id="MF_00100_B">
    <property type="entry name" value="IF_2_B"/>
    <property type="match status" value="1"/>
</dbReference>
<dbReference type="InterPro" id="IPR053905">
    <property type="entry name" value="EF-G-like_DII"/>
</dbReference>
<dbReference type="InterPro" id="IPR044145">
    <property type="entry name" value="IF2_II"/>
</dbReference>
<dbReference type="InterPro" id="IPR006847">
    <property type="entry name" value="IF2_N"/>
</dbReference>
<dbReference type="InterPro" id="IPR027417">
    <property type="entry name" value="P-loop_NTPase"/>
</dbReference>
<dbReference type="InterPro" id="IPR005225">
    <property type="entry name" value="Small_GTP-bd"/>
</dbReference>
<dbReference type="InterPro" id="IPR000795">
    <property type="entry name" value="T_Tr_GTP-bd_dom"/>
</dbReference>
<dbReference type="InterPro" id="IPR000178">
    <property type="entry name" value="TF_IF2_bacterial-like"/>
</dbReference>
<dbReference type="InterPro" id="IPR015760">
    <property type="entry name" value="TIF_IF2"/>
</dbReference>
<dbReference type="InterPro" id="IPR023115">
    <property type="entry name" value="TIF_IF2_dom3"/>
</dbReference>
<dbReference type="InterPro" id="IPR036925">
    <property type="entry name" value="TIF_IF2_dom3_sf"/>
</dbReference>
<dbReference type="InterPro" id="IPR009000">
    <property type="entry name" value="Transl_B-barrel_sf"/>
</dbReference>
<dbReference type="NCBIfam" id="TIGR00487">
    <property type="entry name" value="IF-2"/>
    <property type="match status" value="1"/>
</dbReference>
<dbReference type="NCBIfam" id="TIGR00231">
    <property type="entry name" value="small_GTP"/>
    <property type="match status" value="1"/>
</dbReference>
<dbReference type="PANTHER" id="PTHR43381:SF5">
    <property type="entry name" value="TR-TYPE G DOMAIN-CONTAINING PROTEIN"/>
    <property type="match status" value="1"/>
</dbReference>
<dbReference type="PANTHER" id="PTHR43381">
    <property type="entry name" value="TRANSLATION INITIATION FACTOR IF-2-RELATED"/>
    <property type="match status" value="1"/>
</dbReference>
<dbReference type="Pfam" id="PF22042">
    <property type="entry name" value="EF-G_D2"/>
    <property type="match status" value="1"/>
</dbReference>
<dbReference type="Pfam" id="PF00009">
    <property type="entry name" value="GTP_EFTU"/>
    <property type="match status" value="1"/>
</dbReference>
<dbReference type="Pfam" id="PF11987">
    <property type="entry name" value="IF-2"/>
    <property type="match status" value="1"/>
</dbReference>
<dbReference type="Pfam" id="PF04760">
    <property type="entry name" value="IF2_N"/>
    <property type="match status" value="1"/>
</dbReference>
<dbReference type="SUPFAM" id="SSF52156">
    <property type="entry name" value="Initiation factor IF2/eIF5b, domain 3"/>
    <property type="match status" value="1"/>
</dbReference>
<dbReference type="SUPFAM" id="SSF52540">
    <property type="entry name" value="P-loop containing nucleoside triphosphate hydrolases"/>
    <property type="match status" value="1"/>
</dbReference>
<dbReference type="SUPFAM" id="SSF50447">
    <property type="entry name" value="Translation proteins"/>
    <property type="match status" value="2"/>
</dbReference>
<dbReference type="PROSITE" id="PS51722">
    <property type="entry name" value="G_TR_2"/>
    <property type="match status" value="1"/>
</dbReference>
<protein>
    <recommendedName>
        <fullName evidence="2">Translation initiation factor IF-2</fullName>
    </recommendedName>
</protein>
<accession>B1L7T1</accession>
<keyword id="KW-0963">Cytoplasm</keyword>
<keyword id="KW-0342">GTP-binding</keyword>
<keyword id="KW-0396">Initiation factor</keyword>
<keyword id="KW-0547">Nucleotide-binding</keyword>
<keyword id="KW-0648">Protein biosynthesis</keyword>
<sequence length="690" mass="77894">MARLRVYELARKLNMSPKELLQELEELGVNVKSHMSYVDEEMANIIIDLLEEDNRKAKQPSKPKKEKGEEEVEKEVVEKKKKKKITLKPDELKLDIIAEKIGVPQNKIIQDMFVKRGIALRPGQILKLEEVEQILKEYKIEIEIEEEQQTSVEEVDEFELLEKRYQELYEKEKDKLVPRPPVVTVMGHVDHGKTTLLDRIRSTRVAEREEGGITQSIGAYQVEVNGKKITFIDTPGHELFTEMRARGAQATDIVVLVVAADDGVMPQTIEAYNHAKAANVPIIVAINKIDKPNANVEKTKQELVEKLGLIPEEWGGDTIVVPISARTGQGVDELLEMILLVAEMNEIKCYPEGPARAVIIESKLDKKMGPVASVIVKDGVLKVGDAVVASNTYGKVRNLFDDNMRPIREAYPSQPVMILGFEDVPDVHSNVYVVESVEKAKEIVEKRLQRLEAQKQSRKHINLEDLMKMMQEKEKKVLNLILKADTYGSVAALKNAINKLQSKEIELNIVHAGVGEISTSDVMLAAAVDGVILGFRVKVNNQARRLAEQEGVDVRTYSIIYKLVEDLKLALEGMLEPEEVEEVIGHGEIRKVFKISKVGKVAGVQMLDGKADRNGFVRIYRNGQLVFEGKIESLKHYKEDVNVVEAPQECGIKFAGFDDIQEGDELEFYVIRKVKRKPTFVEEQSDQEQK</sequence>
<feature type="chain" id="PRO_1000093840" description="Translation initiation factor IF-2">
    <location>
        <begin position="1"/>
        <end position="690"/>
    </location>
</feature>
<feature type="domain" description="tr-type G">
    <location>
        <begin position="178"/>
        <end position="346"/>
    </location>
</feature>
<feature type="region of interest" description="G1" evidence="1">
    <location>
        <begin position="187"/>
        <end position="194"/>
    </location>
</feature>
<feature type="region of interest" description="G2" evidence="1">
    <location>
        <begin position="212"/>
        <end position="216"/>
    </location>
</feature>
<feature type="region of interest" description="G3" evidence="1">
    <location>
        <begin position="233"/>
        <end position="236"/>
    </location>
</feature>
<feature type="region of interest" description="G4" evidence="1">
    <location>
        <begin position="287"/>
        <end position="290"/>
    </location>
</feature>
<feature type="region of interest" description="G5" evidence="1">
    <location>
        <begin position="324"/>
        <end position="326"/>
    </location>
</feature>
<feature type="binding site" evidence="2">
    <location>
        <begin position="187"/>
        <end position="194"/>
    </location>
    <ligand>
        <name>GTP</name>
        <dbReference type="ChEBI" id="CHEBI:37565"/>
    </ligand>
</feature>
<feature type="binding site" evidence="2">
    <location>
        <begin position="233"/>
        <end position="237"/>
    </location>
    <ligand>
        <name>GTP</name>
        <dbReference type="ChEBI" id="CHEBI:37565"/>
    </ligand>
</feature>
<feature type="binding site" evidence="2">
    <location>
        <begin position="287"/>
        <end position="290"/>
    </location>
    <ligand>
        <name>GTP</name>
        <dbReference type="ChEBI" id="CHEBI:37565"/>
    </ligand>
</feature>
<reference key="1">
    <citation type="journal article" date="2011" name="J. Bacteriol.">
        <title>Genome sequence of Thermotoga sp. strain RQ2, a hyperthermophilic bacterium isolated from a geothermally heated region of the seafloor near Ribeira Quente, the Azores.</title>
        <authorList>
            <person name="Swithers K.S."/>
            <person name="DiPippo J.L."/>
            <person name="Bruce D.C."/>
            <person name="Detter C."/>
            <person name="Tapia R."/>
            <person name="Han S."/>
            <person name="Saunders E."/>
            <person name="Goodwin L.A."/>
            <person name="Han J."/>
            <person name="Woyke T."/>
            <person name="Pitluck S."/>
            <person name="Pennacchio L."/>
            <person name="Nolan M."/>
            <person name="Mikhailova N."/>
            <person name="Lykidis A."/>
            <person name="Land M.L."/>
            <person name="Brettin T."/>
            <person name="Stetter K.O."/>
            <person name="Nelson K.E."/>
            <person name="Gogarten J.P."/>
            <person name="Noll K.M."/>
        </authorList>
    </citation>
    <scope>NUCLEOTIDE SEQUENCE [LARGE SCALE GENOMIC DNA]</scope>
    <source>
        <strain>RQ2</strain>
    </source>
</reference>